<feature type="chain" id="PRO_1000165200" description="Type III pantothenate kinase">
    <location>
        <begin position="1"/>
        <end position="259"/>
    </location>
</feature>
<feature type="active site" description="Proton acceptor" evidence="1">
    <location>
        <position position="109"/>
    </location>
</feature>
<feature type="binding site" evidence="1">
    <location>
        <begin position="6"/>
        <end position="13"/>
    </location>
    <ligand>
        <name>ATP</name>
        <dbReference type="ChEBI" id="CHEBI:30616"/>
    </ligand>
</feature>
<feature type="binding site" evidence="1">
    <location>
        <begin position="107"/>
        <end position="110"/>
    </location>
    <ligand>
        <name>substrate</name>
    </ligand>
</feature>
<feature type="binding site" evidence="1">
    <location>
        <position position="129"/>
    </location>
    <ligand>
        <name>K(+)</name>
        <dbReference type="ChEBI" id="CHEBI:29103"/>
    </ligand>
</feature>
<feature type="binding site" evidence="1">
    <location>
        <position position="132"/>
    </location>
    <ligand>
        <name>ATP</name>
        <dbReference type="ChEBI" id="CHEBI:30616"/>
    </ligand>
</feature>
<feature type="binding site" evidence="1">
    <location>
        <position position="184"/>
    </location>
    <ligand>
        <name>substrate</name>
    </ligand>
</feature>
<name>COAX_LISMH</name>
<accession>B8DGK4</accession>
<keyword id="KW-0067">ATP-binding</keyword>
<keyword id="KW-0173">Coenzyme A biosynthesis</keyword>
<keyword id="KW-0963">Cytoplasm</keyword>
<keyword id="KW-0418">Kinase</keyword>
<keyword id="KW-0479">Metal-binding</keyword>
<keyword id="KW-0547">Nucleotide-binding</keyword>
<keyword id="KW-0630">Potassium</keyword>
<keyword id="KW-0808">Transferase</keyword>
<reference key="1">
    <citation type="journal article" date="2011" name="J. Bacteriol.">
        <title>Genome sequence of lineage III Listeria monocytogenes strain HCC23.</title>
        <authorList>
            <person name="Steele C.L."/>
            <person name="Donaldson J.R."/>
            <person name="Paul D."/>
            <person name="Banes M.M."/>
            <person name="Arick T."/>
            <person name="Bridges S.M."/>
            <person name="Lawrence M.L."/>
        </authorList>
    </citation>
    <scope>NUCLEOTIDE SEQUENCE [LARGE SCALE GENOMIC DNA]</scope>
    <source>
        <strain>HCC23</strain>
    </source>
</reference>
<comment type="function">
    <text evidence="1">Catalyzes the phosphorylation of pantothenate (Pan), the first step in CoA biosynthesis.</text>
</comment>
<comment type="catalytic activity">
    <reaction evidence="1">
        <text>(R)-pantothenate + ATP = (R)-4'-phosphopantothenate + ADP + H(+)</text>
        <dbReference type="Rhea" id="RHEA:16373"/>
        <dbReference type="ChEBI" id="CHEBI:10986"/>
        <dbReference type="ChEBI" id="CHEBI:15378"/>
        <dbReference type="ChEBI" id="CHEBI:29032"/>
        <dbReference type="ChEBI" id="CHEBI:30616"/>
        <dbReference type="ChEBI" id="CHEBI:456216"/>
        <dbReference type="EC" id="2.7.1.33"/>
    </reaction>
</comment>
<comment type="cofactor">
    <cofactor evidence="1">
        <name>NH4(+)</name>
        <dbReference type="ChEBI" id="CHEBI:28938"/>
    </cofactor>
    <cofactor evidence="1">
        <name>K(+)</name>
        <dbReference type="ChEBI" id="CHEBI:29103"/>
    </cofactor>
    <text evidence="1">A monovalent cation. Ammonium or potassium.</text>
</comment>
<comment type="pathway">
    <text evidence="1">Cofactor biosynthesis; coenzyme A biosynthesis; CoA from (R)-pantothenate: step 1/5.</text>
</comment>
<comment type="subunit">
    <text evidence="1">Homodimer.</text>
</comment>
<comment type="subcellular location">
    <subcellularLocation>
        <location evidence="1">Cytoplasm</location>
    </subcellularLocation>
</comment>
<comment type="similarity">
    <text evidence="1">Belongs to the type III pantothenate kinase family.</text>
</comment>
<sequence>MILVIDVGNTNCTVGVYEKQKLLKHWRMTTDRHRTSDELGMTVLNFFSYANLTPSDIQGIIISSVVPPIMHAMETMCVRYFNIRPLIVGPGIKTGLNLKVDNPREIGSDRIVNAVAASEEYGTPVIVVDFGTATTFCYIDESGVYQGGAIAPGIMISTEALYNRAAKLPRVDIAESNQIIGKSTVASMQAGIFYGFVGQCEGIIAEIKKQSNASPVVVATGGLARMITEKSSAVDILDPFLTLKGLELLYRRNKPTTEK</sequence>
<organism>
    <name type="scientific">Listeria monocytogenes serotype 4a (strain HCC23)</name>
    <dbReference type="NCBI Taxonomy" id="552536"/>
    <lineage>
        <taxon>Bacteria</taxon>
        <taxon>Bacillati</taxon>
        <taxon>Bacillota</taxon>
        <taxon>Bacilli</taxon>
        <taxon>Bacillales</taxon>
        <taxon>Listeriaceae</taxon>
        <taxon>Listeria</taxon>
    </lineage>
</organism>
<evidence type="ECO:0000255" key="1">
    <source>
        <dbReference type="HAMAP-Rule" id="MF_01274"/>
    </source>
</evidence>
<dbReference type="EC" id="2.7.1.33" evidence="1"/>
<dbReference type="EMBL" id="CP001175">
    <property type="protein sequence ID" value="ACK40757.1"/>
    <property type="molecule type" value="Genomic_DNA"/>
</dbReference>
<dbReference type="RefSeq" id="WP_003725746.1">
    <property type="nucleotide sequence ID" value="NC_011660.1"/>
</dbReference>
<dbReference type="SMR" id="B8DGK4"/>
<dbReference type="KEGG" id="lmh:LMHCC_2422"/>
<dbReference type="HOGENOM" id="CLU_066627_1_0_9"/>
<dbReference type="UniPathway" id="UPA00241">
    <property type="reaction ID" value="UER00352"/>
</dbReference>
<dbReference type="GO" id="GO:0005737">
    <property type="term" value="C:cytoplasm"/>
    <property type="evidence" value="ECO:0007669"/>
    <property type="project" value="UniProtKB-SubCell"/>
</dbReference>
<dbReference type="GO" id="GO:0005524">
    <property type="term" value="F:ATP binding"/>
    <property type="evidence" value="ECO:0007669"/>
    <property type="project" value="UniProtKB-UniRule"/>
</dbReference>
<dbReference type="GO" id="GO:0046872">
    <property type="term" value="F:metal ion binding"/>
    <property type="evidence" value="ECO:0007669"/>
    <property type="project" value="UniProtKB-KW"/>
</dbReference>
<dbReference type="GO" id="GO:0004594">
    <property type="term" value="F:pantothenate kinase activity"/>
    <property type="evidence" value="ECO:0007669"/>
    <property type="project" value="UniProtKB-UniRule"/>
</dbReference>
<dbReference type="GO" id="GO:0015937">
    <property type="term" value="P:coenzyme A biosynthetic process"/>
    <property type="evidence" value="ECO:0007669"/>
    <property type="project" value="UniProtKB-UniRule"/>
</dbReference>
<dbReference type="CDD" id="cd24015">
    <property type="entry name" value="ASKHA_NBD_PanK-III"/>
    <property type="match status" value="1"/>
</dbReference>
<dbReference type="Gene3D" id="3.30.420.40">
    <property type="match status" value="2"/>
</dbReference>
<dbReference type="HAMAP" id="MF_01274">
    <property type="entry name" value="Pantothen_kinase_3"/>
    <property type="match status" value="1"/>
</dbReference>
<dbReference type="InterPro" id="IPR043129">
    <property type="entry name" value="ATPase_NBD"/>
</dbReference>
<dbReference type="InterPro" id="IPR004619">
    <property type="entry name" value="Type_III_PanK"/>
</dbReference>
<dbReference type="NCBIfam" id="TIGR00671">
    <property type="entry name" value="baf"/>
    <property type="match status" value="1"/>
</dbReference>
<dbReference type="NCBIfam" id="NF009843">
    <property type="entry name" value="PRK13318.1-1"/>
    <property type="match status" value="1"/>
</dbReference>
<dbReference type="NCBIfam" id="NF009847">
    <property type="entry name" value="PRK13318.1-5"/>
    <property type="match status" value="1"/>
</dbReference>
<dbReference type="NCBIfam" id="NF009848">
    <property type="entry name" value="PRK13318.1-6"/>
    <property type="match status" value="1"/>
</dbReference>
<dbReference type="NCBIfam" id="NF009855">
    <property type="entry name" value="PRK13321.1"/>
    <property type="match status" value="1"/>
</dbReference>
<dbReference type="PANTHER" id="PTHR34265">
    <property type="entry name" value="TYPE III PANTOTHENATE KINASE"/>
    <property type="match status" value="1"/>
</dbReference>
<dbReference type="PANTHER" id="PTHR34265:SF1">
    <property type="entry name" value="TYPE III PANTOTHENATE KINASE"/>
    <property type="match status" value="1"/>
</dbReference>
<dbReference type="Pfam" id="PF03309">
    <property type="entry name" value="Pan_kinase"/>
    <property type="match status" value="1"/>
</dbReference>
<dbReference type="SUPFAM" id="SSF53067">
    <property type="entry name" value="Actin-like ATPase domain"/>
    <property type="match status" value="2"/>
</dbReference>
<protein>
    <recommendedName>
        <fullName evidence="1">Type III pantothenate kinase</fullName>
        <ecNumber evidence="1">2.7.1.33</ecNumber>
    </recommendedName>
    <alternativeName>
        <fullName evidence="1">PanK-III</fullName>
    </alternativeName>
    <alternativeName>
        <fullName evidence="1">Pantothenic acid kinase</fullName>
    </alternativeName>
</protein>
<gene>
    <name evidence="1" type="primary">coaX</name>
    <name type="ordered locus">LMHCC_2422</name>
</gene>
<proteinExistence type="inferred from homology"/>